<evidence type="ECO:0000256" key="1">
    <source>
        <dbReference type="SAM" id="MobiDB-lite"/>
    </source>
</evidence>
<accession>Q9LXZ3</accession>
<dbReference type="EMBL" id="AL163972">
    <property type="protein sequence ID" value="CAB88050.1"/>
    <property type="molecule type" value="Genomic_DNA"/>
</dbReference>
<dbReference type="EMBL" id="CP002686">
    <property type="protein sequence ID" value="AEE79525.1"/>
    <property type="molecule type" value="Genomic_DNA"/>
</dbReference>
<dbReference type="PIR" id="T49048">
    <property type="entry name" value="T49048"/>
</dbReference>
<dbReference type="RefSeq" id="NP_191206.1">
    <property type="nucleotide sequence ID" value="NM_115505.3"/>
</dbReference>
<dbReference type="SMR" id="Q9LXZ3"/>
<dbReference type="FunCoup" id="Q9LXZ3">
    <property type="interactions" value="51"/>
</dbReference>
<dbReference type="iPTMnet" id="Q9LXZ3"/>
<dbReference type="PaxDb" id="3702-AT3G56470.1"/>
<dbReference type="EnsemblPlants" id="AT3G56470.1">
    <property type="protein sequence ID" value="AT3G56470.1"/>
    <property type="gene ID" value="AT3G56470"/>
</dbReference>
<dbReference type="GeneID" id="824814"/>
<dbReference type="Gramene" id="AT3G56470.1">
    <property type="protein sequence ID" value="AT3G56470.1"/>
    <property type="gene ID" value="AT3G56470"/>
</dbReference>
<dbReference type="KEGG" id="ath:AT3G56470"/>
<dbReference type="Araport" id="AT3G56470"/>
<dbReference type="TAIR" id="AT3G56470"/>
<dbReference type="eggNOG" id="ENOG502QWFR">
    <property type="taxonomic scope" value="Eukaryota"/>
</dbReference>
<dbReference type="HOGENOM" id="CLU_060427_0_0_1"/>
<dbReference type="InParanoid" id="Q9LXZ3"/>
<dbReference type="OMA" id="NIWIMPP"/>
<dbReference type="PhylomeDB" id="Q9LXZ3"/>
<dbReference type="PRO" id="PR:Q9LXZ3"/>
<dbReference type="Proteomes" id="UP000006548">
    <property type="component" value="Chromosome 3"/>
</dbReference>
<dbReference type="ExpressionAtlas" id="Q9LXZ3">
    <property type="expression patterns" value="baseline and differential"/>
</dbReference>
<dbReference type="CDD" id="cd09917">
    <property type="entry name" value="F-box_SF"/>
    <property type="match status" value="1"/>
</dbReference>
<dbReference type="Gene3D" id="1.20.1280.50">
    <property type="match status" value="1"/>
</dbReference>
<dbReference type="InterPro" id="IPR036047">
    <property type="entry name" value="F-box-like_dom_sf"/>
</dbReference>
<dbReference type="InterPro" id="IPR001810">
    <property type="entry name" value="F-box_dom"/>
</dbReference>
<dbReference type="InterPro" id="IPR011043">
    <property type="entry name" value="Gal_Oxase/kelch_b-propeller"/>
</dbReference>
<dbReference type="InterPro" id="IPR005174">
    <property type="entry name" value="KIB1-4_b-propeller"/>
</dbReference>
<dbReference type="PANTHER" id="PTHR33127:SF62">
    <property type="entry name" value="BNAA09G35900D PROTEIN"/>
    <property type="match status" value="1"/>
</dbReference>
<dbReference type="PANTHER" id="PTHR33127">
    <property type="entry name" value="TRANSMEMBRANE PROTEIN"/>
    <property type="match status" value="1"/>
</dbReference>
<dbReference type="Pfam" id="PF03478">
    <property type="entry name" value="Beta-prop_KIB1-4"/>
    <property type="match status" value="1"/>
</dbReference>
<dbReference type="Pfam" id="PF00646">
    <property type="entry name" value="F-box"/>
    <property type="match status" value="1"/>
</dbReference>
<dbReference type="SUPFAM" id="SSF81383">
    <property type="entry name" value="F-box domain"/>
    <property type="match status" value="1"/>
</dbReference>
<dbReference type="SUPFAM" id="SSF50965">
    <property type="entry name" value="Galactose oxidase, central domain"/>
    <property type="match status" value="1"/>
</dbReference>
<organism>
    <name type="scientific">Arabidopsis thaliana</name>
    <name type="common">Mouse-ear cress</name>
    <dbReference type="NCBI Taxonomy" id="3702"/>
    <lineage>
        <taxon>Eukaryota</taxon>
        <taxon>Viridiplantae</taxon>
        <taxon>Streptophyta</taxon>
        <taxon>Embryophyta</taxon>
        <taxon>Tracheophyta</taxon>
        <taxon>Spermatophyta</taxon>
        <taxon>Magnoliopsida</taxon>
        <taxon>eudicotyledons</taxon>
        <taxon>Gunneridae</taxon>
        <taxon>Pentapetalae</taxon>
        <taxon>rosids</taxon>
        <taxon>malvids</taxon>
        <taxon>Brassicales</taxon>
        <taxon>Brassicaceae</taxon>
        <taxon>Camelineae</taxon>
        <taxon>Arabidopsis</taxon>
    </lineage>
</organism>
<reference key="1">
    <citation type="journal article" date="2000" name="Nature">
        <title>Sequence and analysis of chromosome 3 of the plant Arabidopsis thaliana.</title>
        <authorList>
            <person name="Salanoubat M."/>
            <person name="Lemcke K."/>
            <person name="Rieger M."/>
            <person name="Ansorge W."/>
            <person name="Unseld M."/>
            <person name="Fartmann B."/>
            <person name="Valle G."/>
            <person name="Bloecker H."/>
            <person name="Perez-Alonso M."/>
            <person name="Obermaier B."/>
            <person name="Delseny M."/>
            <person name="Boutry M."/>
            <person name="Grivell L.A."/>
            <person name="Mache R."/>
            <person name="Puigdomenech P."/>
            <person name="De Simone V."/>
            <person name="Choisne N."/>
            <person name="Artiguenave F."/>
            <person name="Robert C."/>
            <person name="Brottier P."/>
            <person name="Wincker P."/>
            <person name="Cattolico L."/>
            <person name="Weissenbach J."/>
            <person name="Saurin W."/>
            <person name="Quetier F."/>
            <person name="Schaefer M."/>
            <person name="Mueller-Auer S."/>
            <person name="Gabel C."/>
            <person name="Fuchs M."/>
            <person name="Benes V."/>
            <person name="Wurmbach E."/>
            <person name="Drzonek H."/>
            <person name="Erfle H."/>
            <person name="Jordan N."/>
            <person name="Bangert S."/>
            <person name="Wiedelmann R."/>
            <person name="Kranz H."/>
            <person name="Voss H."/>
            <person name="Holland R."/>
            <person name="Brandt P."/>
            <person name="Nyakatura G."/>
            <person name="Vezzi A."/>
            <person name="D'Angelo M."/>
            <person name="Pallavicini A."/>
            <person name="Toppo S."/>
            <person name="Simionati B."/>
            <person name="Conrad A."/>
            <person name="Hornischer K."/>
            <person name="Kauer G."/>
            <person name="Loehnert T.-H."/>
            <person name="Nordsiek G."/>
            <person name="Reichelt J."/>
            <person name="Scharfe M."/>
            <person name="Schoen O."/>
            <person name="Bargues M."/>
            <person name="Terol J."/>
            <person name="Climent J."/>
            <person name="Navarro P."/>
            <person name="Collado C."/>
            <person name="Perez-Perez A."/>
            <person name="Ottenwaelder B."/>
            <person name="Duchemin D."/>
            <person name="Cooke R."/>
            <person name="Laudie M."/>
            <person name="Berger-Llauro C."/>
            <person name="Purnelle B."/>
            <person name="Masuy D."/>
            <person name="de Haan M."/>
            <person name="Maarse A.C."/>
            <person name="Alcaraz J.-P."/>
            <person name="Cottet A."/>
            <person name="Casacuberta E."/>
            <person name="Monfort A."/>
            <person name="Argiriou A."/>
            <person name="Flores M."/>
            <person name="Liguori R."/>
            <person name="Vitale D."/>
            <person name="Mannhaupt G."/>
            <person name="Haase D."/>
            <person name="Schoof H."/>
            <person name="Rudd S."/>
            <person name="Zaccaria P."/>
            <person name="Mewes H.-W."/>
            <person name="Mayer K.F.X."/>
            <person name="Kaul S."/>
            <person name="Town C.D."/>
            <person name="Koo H.L."/>
            <person name="Tallon L.J."/>
            <person name="Jenkins J."/>
            <person name="Rooney T."/>
            <person name="Rizzo M."/>
            <person name="Walts A."/>
            <person name="Utterback T."/>
            <person name="Fujii C.Y."/>
            <person name="Shea T.P."/>
            <person name="Creasy T.H."/>
            <person name="Haas B."/>
            <person name="Maiti R."/>
            <person name="Wu D."/>
            <person name="Peterson J."/>
            <person name="Van Aken S."/>
            <person name="Pai G."/>
            <person name="Militscher J."/>
            <person name="Sellers P."/>
            <person name="Gill J.E."/>
            <person name="Feldblyum T.V."/>
            <person name="Preuss D."/>
            <person name="Lin X."/>
            <person name="Nierman W.C."/>
            <person name="Salzberg S.L."/>
            <person name="White O."/>
            <person name="Venter J.C."/>
            <person name="Fraser C.M."/>
            <person name="Kaneko T."/>
            <person name="Nakamura Y."/>
            <person name="Sato S."/>
            <person name="Kato T."/>
            <person name="Asamizu E."/>
            <person name="Sasamoto S."/>
            <person name="Kimura T."/>
            <person name="Idesawa K."/>
            <person name="Kawashima K."/>
            <person name="Kishida Y."/>
            <person name="Kiyokawa C."/>
            <person name="Kohara M."/>
            <person name="Matsumoto M."/>
            <person name="Matsuno A."/>
            <person name="Muraki A."/>
            <person name="Nakayama S."/>
            <person name="Nakazaki N."/>
            <person name="Shinpo S."/>
            <person name="Takeuchi C."/>
            <person name="Wada T."/>
            <person name="Watanabe A."/>
            <person name="Yamada M."/>
            <person name="Yasuda M."/>
            <person name="Tabata S."/>
        </authorList>
    </citation>
    <scope>NUCLEOTIDE SEQUENCE [LARGE SCALE GENOMIC DNA]</scope>
    <source>
        <strain>cv. Columbia</strain>
    </source>
</reference>
<reference key="2">
    <citation type="journal article" date="2017" name="Plant J.">
        <title>Araport11: a complete reannotation of the Arabidopsis thaliana reference genome.</title>
        <authorList>
            <person name="Cheng C.Y."/>
            <person name="Krishnakumar V."/>
            <person name="Chan A.P."/>
            <person name="Thibaud-Nissen F."/>
            <person name="Schobel S."/>
            <person name="Town C.D."/>
        </authorList>
    </citation>
    <scope>GENOME REANNOTATION</scope>
    <source>
        <strain>cv. Columbia</strain>
    </source>
</reference>
<gene>
    <name type="ordered locus">At3g56470</name>
    <name type="ORF">T5P19.120</name>
</gene>
<proteinExistence type="evidence at transcript level"/>
<protein>
    <recommendedName>
        <fullName>F-box protein At3g56470</fullName>
    </recommendedName>
</protein>
<keyword id="KW-1185">Reference proteome</keyword>
<name>FB204_ARATH</name>
<sequence>MVTRRRSKKKKKTKRKKQSSKEKEKYQTFINLPCDLLQLVISRLPLKDNIRASAVCKTWHEACVSLRVIHTSPWLIYFSKTDDSYELYDPSMQKNCNLHFPELSGFRVCYSKDGWLLMYNPNSYQLLFFNPFTRDCVPMPTLWMAYDQRMAFSCAPTSTSCLLFTVTSVTWNYITIKTYFANAKEWKTSVFKNRLQRNFNTFEQIVFSNGVFYCLTNTGCLALFDPSLNYWNVLPGRPPKRPGSNGCFMTEHQGEIFLIYMYRHMNPTVLKLDLTSFEWAERKTLGGLTIYASALSSESRAEQQKQSGIWNCLCLSVFHGFKRTCIYYKVDEESEVCFKWKKQNPYENIWIMPPLNLIDLPLFDHRI</sequence>
<feature type="chain" id="PRO_0000283474" description="F-box protein At3g56470">
    <location>
        <begin position="1"/>
        <end position="367"/>
    </location>
</feature>
<feature type="domain" description="F-box">
    <location>
        <begin position="26"/>
        <end position="81"/>
    </location>
</feature>
<feature type="region of interest" description="Disordered" evidence="1">
    <location>
        <begin position="1"/>
        <end position="24"/>
    </location>
</feature>
<feature type="compositionally biased region" description="Basic residues" evidence="1">
    <location>
        <begin position="1"/>
        <end position="18"/>
    </location>
</feature>